<gene>
    <name evidence="1" type="primary">lig</name>
    <name type="ordered locus">Hlac_0878</name>
</gene>
<reference key="1">
    <citation type="journal article" date="2016" name="Stand. Genomic Sci.">
        <title>Complete genome sequence of the Antarctic Halorubrum lacusprofundi type strain ACAM 34.</title>
        <authorList>
            <person name="Anderson I.J."/>
            <person name="DasSarma P."/>
            <person name="Lucas S."/>
            <person name="Copeland A."/>
            <person name="Lapidus A."/>
            <person name="Del Rio T.G."/>
            <person name="Tice H."/>
            <person name="Dalin E."/>
            <person name="Bruce D.C."/>
            <person name="Goodwin L."/>
            <person name="Pitluck S."/>
            <person name="Sims D."/>
            <person name="Brettin T.S."/>
            <person name="Detter J.C."/>
            <person name="Han C.S."/>
            <person name="Larimer F."/>
            <person name="Hauser L."/>
            <person name="Land M."/>
            <person name="Ivanova N."/>
            <person name="Richardson P."/>
            <person name="Cavicchioli R."/>
            <person name="DasSarma S."/>
            <person name="Woese C.R."/>
            <person name="Kyrpides N.C."/>
        </authorList>
    </citation>
    <scope>NUCLEOTIDE SEQUENCE [LARGE SCALE GENOMIC DNA]</scope>
    <source>
        <strain>ATCC 49239 / DSM 5036 / JCM 8891 / ACAM 34</strain>
    </source>
</reference>
<comment type="function">
    <text evidence="1">DNA ligase that seals nicks in double-stranded DNA during DNA replication, DNA recombination and DNA repair.</text>
</comment>
<comment type="catalytic activity">
    <reaction evidence="1">
        <text>ATP + (deoxyribonucleotide)n-3'-hydroxyl + 5'-phospho-(deoxyribonucleotide)m = (deoxyribonucleotide)n+m + AMP + diphosphate.</text>
        <dbReference type="EC" id="6.5.1.1"/>
    </reaction>
</comment>
<comment type="cofactor">
    <cofactor evidence="1">
        <name>Mg(2+)</name>
        <dbReference type="ChEBI" id="CHEBI:18420"/>
    </cofactor>
</comment>
<comment type="similarity">
    <text evidence="1">Belongs to the ATP-dependent DNA ligase family.</text>
</comment>
<feature type="chain" id="PRO_1000134727" description="DNA ligase">
    <location>
        <begin position="1"/>
        <end position="594"/>
    </location>
</feature>
<feature type="active site" description="N6-AMP-lysine intermediate" evidence="1">
    <location>
        <position position="282"/>
    </location>
</feature>
<feature type="binding site" evidence="1">
    <location>
        <position position="280"/>
    </location>
    <ligand>
        <name>ATP</name>
        <dbReference type="ChEBI" id="CHEBI:30616"/>
    </ligand>
</feature>
<feature type="binding site" evidence="1">
    <location>
        <position position="287"/>
    </location>
    <ligand>
        <name>ATP</name>
        <dbReference type="ChEBI" id="CHEBI:30616"/>
    </ligand>
</feature>
<feature type="binding site" evidence="1">
    <location>
        <position position="316"/>
    </location>
    <ligand>
        <name>ATP</name>
        <dbReference type="ChEBI" id="CHEBI:30616"/>
    </ligand>
</feature>
<feature type="binding site" evidence="1">
    <location>
        <position position="345"/>
    </location>
    <ligand>
        <name>ATP</name>
        <dbReference type="ChEBI" id="CHEBI:30616"/>
    </ligand>
</feature>
<feature type="binding site" evidence="1">
    <location>
        <position position="385"/>
    </location>
    <ligand>
        <name>ATP</name>
        <dbReference type="ChEBI" id="CHEBI:30616"/>
    </ligand>
</feature>
<feature type="binding site" evidence="1">
    <location>
        <position position="456"/>
    </location>
    <ligand>
        <name>ATP</name>
        <dbReference type="ChEBI" id="CHEBI:30616"/>
    </ligand>
</feature>
<feature type="binding site" evidence="1">
    <location>
        <position position="462"/>
    </location>
    <ligand>
        <name>ATP</name>
        <dbReference type="ChEBI" id="CHEBI:30616"/>
    </ligand>
</feature>
<name>DNLI_HALLT</name>
<accession>B9LUZ9</accession>
<evidence type="ECO:0000255" key="1">
    <source>
        <dbReference type="HAMAP-Rule" id="MF_00407"/>
    </source>
</evidence>
<proteinExistence type="inferred from homology"/>
<organism>
    <name type="scientific">Halorubrum lacusprofundi (strain ATCC 49239 / DSM 5036 / JCM 8891 / ACAM 34)</name>
    <dbReference type="NCBI Taxonomy" id="416348"/>
    <lineage>
        <taxon>Archaea</taxon>
        <taxon>Methanobacteriati</taxon>
        <taxon>Methanobacteriota</taxon>
        <taxon>Stenosarchaea group</taxon>
        <taxon>Halobacteria</taxon>
        <taxon>Halobacteriales</taxon>
        <taxon>Haloferacaceae</taxon>
        <taxon>Halorubrum</taxon>
    </lineage>
</organism>
<sequence length="594" mass="63404">MEFAAFADRAEELAAEPADIGTTRLVTDLLGAAGGTDENDDDLATVTRFLLGRVFPAHDTRTLDVGPALCREAIARAAGPNVTADDVEDRLAEEGEIGAVAAGFEFGGQRGLAAFGEGRDRLTVAAVDAELRRLAAAAGDGSESHKRDALFGLFNRCEPAEAKVIARLVLGEMRLGVGEGAVRDAIAEAFLAGNPEGDERDESDTDDDPILRAGDEAVVAVERALQVTNDYGRVAVLARDEGLNGLRAEGLAVGRPVQAMLAQAGTATDAVEAFGEVAVETKFDGARVQVHYVPESAAEGDDAAGGTELGPRIYSRNMDDVTDALPEVVEYVEARVSVPVILDGEVVAVDDDGDPLPFQEVLRRFRRKHDVDRMREEVGLRLHAFDCLHADGEDLLDEPFRARHDRLAEVLSDAAASVEFAGDPAAIEAAEAAALGAGHEGVMLKNPEAAYTPGNRGRDWLKRKPDVETLDAVVVGAEWGEGRRAELFGTFLLGVRAGDDELATIGKVATGLTDEELADLTERLEPHVVSEDGTEIEIRPEVVLEVGYEEIQTSPTYSSGYALRFPRFVGVRDDKSVDDADSLERVVRLAGDEK</sequence>
<protein>
    <recommendedName>
        <fullName evidence="1">DNA ligase</fullName>
        <ecNumber evidence="1">6.5.1.1</ecNumber>
    </recommendedName>
    <alternativeName>
        <fullName evidence="1">Polydeoxyribonucleotide synthase [ATP]</fullName>
    </alternativeName>
</protein>
<keyword id="KW-0067">ATP-binding</keyword>
<keyword id="KW-0131">Cell cycle</keyword>
<keyword id="KW-0132">Cell division</keyword>
<keyword id="KW-0227">DNA damage</keyword>
<keyword id="KW-0233">DNA recombination</keyword>
<keyword id="KW-0234">DNA repair</keyword>
<keyword id="KW-0235">DNA replication</keyword>
<keyword id="KW-0436">Ligase</keyword>
<keyword id="KW-0460">Magnesium</keyword>
<keyword id="KW-0479">Metal-binding</keyword>
<keyword id="KW-0547">Nucleotide-binding</keyword>
<keyword id="KW-1185">Reference proteome</keyword>
<dbReference type="EC" id="6.5.1.1" evidence="1"/>
<dbReference type="EMBL" id="CP001365">
    <property type="protein sequence ID" value="ACM56476.1"/>
    <property type="molecule type" value="Genomic_DNA"/>
</dbReference>
<dbReference type="RefSeq" id="WP_015909627.1">
    <property type="nucleotide sequence ID" value="NC_012029.1"/>
</dbReference>
<dbReference type="SMR" id="B9LUZ9"/>
<dbReference type="GeneID" id="7401248"/>
<dbReference type="KEGG" id="hla:Hlac_0878"/>
<dbReference type="eggNOG" id="arCOG01347">
    <property type="taxonomic scope" value="Archaea"/>
</dbReference>
<dbReference type="HOGENOM" id="CLU_005138_6_0_2"/>
<dbReference type="Proteomes" id="UP000000740">
    <property type="component" value="Chromosome 1"/>
</dbReference>
<dbReference type="GO" id="GO:0005524">
    <property type="term" value="F:ATP binding"/>
    <property type="evidence" value="ECO:0007669"/>
    <property type="project" value="UniProtKB-UniRule"/>
</dbReference>
<dbReference type="GO" id="GO:0003677">
    <property type="term" value="F:DNA binding"/>
    <property type="evidence" value="ECO:0007669"/>
    <property type="project" value="InterPro"/>
</dbReference>
<dbReference type="GO" id="GO:0003910">
    <property type="term" value="F:DNA ligase (ATP) activity"/>
    <property type="evidence" value="ECO:0007669"/>
    <property type="project" value="UniProtKB-UniRule"/>
</dbReference>
<dbReference type="GO" id="GO:0046872">
    <property type="term" value="F:metal ion binding"/>
    <property type="evidence" value="ECO:0007669"/>
    <property type="project" value="UniProtKB-KW"/>
</dbReference>
<dbReference type="GO" id="GO:0051301">
    <property type="term" value="P:cell division"/>
    <property type="evidence" value="ECO:0007669"/>
    <property type="project" value="UniProtKB-KW"/>
</dbReference>
<dbReference type="GO" id="GO:0071897">
    <property type="term" value="P:DNA biosynthetic process"/>
    <property type="evidence" value="ECO:0007669"/>
    <property type="project" value="InterPro"/>
</dbReference>
<dbReference type="GO" id="GO:0006310">
    <property type="term" value="P:DNA recombination"/>
    <property type="evidence" value="ECO:0007669"/>
    <property type="project" value="UniProtKB-UniRule"/>
</dbReference>
<dbReference type="GO" id="GO:0006281">
    <property type="term" value="P:DNA repair"/>
    <property type="evidence" value="ECO:0007669"/>
    <property type="project" value="UniProtKB-UniRule"/>
</dbReference>
<dbReference type="GO" id="GO:0006273">
    <property type="term" value="P:lagging strand elongation"/>
    <property type="evidence" value="ECO:0007669"/>
    <property type="project" value="TreeGrafter"/>
</dbReference>
<dbReference type="CDD" id="cd07901">
    <property type="entry name" value="Adenylation_DNA_ligase_Arch_LigB"/>
    <property type="match status" value="1"/>
</dbReference>
<dbReference type="CDD" id="cd07972">
    <property type="entry name" value="OBF_DNA_ligase_Arch_LigB"/>
    <property type="match status" value="1"/>
</dbReference>
<dbReference type="Gene3D" id="1.10.3260.10">
    <property type="entry name" value="DNA ligase, ATP-dependent, N-terminal domain"/>
    <property type="match status" value="1"/>
</dbReference>
<dbReference type="Gene3D" id="3.30.470.30">
    <property type="entry name" value="DNA ligase/mRNA capping enzyme"/>
    <property type="match status" value="1"/>
</dbReference>
<dbReference type="Gene3D" id="2.40.50.140">
    <property type="entry name" value="Nucleic acid-binding proteins"/>
    <property type="match status" value="1"/>
</dbReference>
<dbReference type="HAMAP" id="MF_00407">
    <property type="entry name" value="DNA_ligase"/>
    <property type="match status" value="1"/>
</dbReference>
<dbReference type="InterPro" id="IPR050191">
    <property type="entry name" value="ATP-dep_DNA_ligase"/>
</dbReference>
<dbReference type="InterPro" id="IPR022865">
    <property type="entry name" value="DNA_ligae_ATP-dep_bac/arc"/>
</dbReference>
<dbReference type="InterPro" id="IPR000977">
    <property type="entry name" value="DNA_ligase_ATP-dep"/>
</dbReference>
<dbReference type="InterPro" id="IPR012309">
    <property type="entry name" value="DNA_ligase_ATP-dep_C"/>
</dbReference>
<dbReference type="InterPro" id="IPR012310">
    <property type="entry name" value="DNA_ligase_ATP-dep_cent"/>
</dbReference>
<dbReference type="InterPro" id="IPR016059">
    <property type="entry name" value="DNA_ligase_ATP-dep_CS"/>
</dbReference>
<dbReference type="InterPro" id="IPR012308">
    <property type="entry name" value="DNA_ligase_ATP-dep_N"/>
</dbReference>
<dbReference type="InterPro" id="IPR036599">
    <property type="entry name" value="DNA_ligase_N_sf"/>
</dbReference>
<dbReference type="InterPro" id="IPR054890">
    <property type="entry name" value="LigA_Halo"/>
</dbReference>
<dbReference type="InterPro" id="IPR012340">
    <property type="entry name" value="NA-bd_OB-fold"/>
</dbReference>
<dbReference type="NCBIfam" id="TIGR00574">
    <property type="entry name" value="dnl1"/>
    <property type="match status" value="1"/>
</dbReference>
<dbReference type="NCBIfam" id="NF041331">
    <property type="entry name" value="LigA_Halo"/>
    <property type="match status" value="1"/>
</dbReference>
<dbReference type="PANTHER" id="PTHR45674:SF7">
    <property type="entry name" value="DNA LIGASE"/>
    <property type="match status" value="1"/>
</dbReference>
<dbReference type="PANTHER" id="PTHR45674">
    <property type="entry name" value="DNA LIGASE 1/3 FAMILY MEMBER"/>
    <property type="match status" value="1"/>
</dbReference>
<dbReference type="Pfam" id="PF04679">
    <property type="entry name" value="DNA_ligase_A_C"/>
    <property type="match status" value="1"/>
</dbReference>
<dbReference type="Pfam" id="PF01068">
    <property type="entry name" value="DNA_ligase_A_M"/>
    <property type="match status" value="1"/>
</dbReference>
<dbReference type="Pfam" id="PF04675">
    <property type="entry name" value="DNA_ligase_A_N"/>
    <property type="match status" value="1"/>
</dbReference>
<dbReference type="SUPFAM" id="SSF117018">
    <property type="entry name" value="ATP-dependent DNA ligase DNA-binding domain"/>
    <property type="match status" value="1"/>
</dbReference>
<dbReference type="SUPFAM" id="SSF56091">
    <property type="entry name" value="DNA ligase/mRNA capping enzyme, catalytic domain"/>
    <property type="match status" value="1"/>
</dbReference>
<dbReference type="SUPFAM" id="SSF50249">
    <property type="entry name" value="Nucleic acid-binding proteins"/>
    <property type="match status" value="1"/>
</dbReference>
<dbReference type="PROSITE" id="PS00697">
    <property type="entry name" value="DNA_LIGASE_A1"/>
    <property type="match status" value="1"/>
</dbReference>
<dbReference type="PROSITE" id="PS50160">
    <property type="entry name" value="DNA_LIGASE_A3"/>
    <property type="match status" value="1"/>
</dbReference>